<dbReference type="EMBL" id="CU329670">
    <property type="protein sequence ID" value="CAA94706.1"/>
    <property type="molecule type" value="Genomic_DNA"/>
</dbReference>
<dbReference type="PIR" id="T37583">
    <property type="entry name" value="T37583"/>
</dbReference>
<dbReference type="RefSeq" id="NP_594648.1">
    <property type="nucleotide sequence ID" value="NM_001020076.2"/>
</dbReference>
<dbReference type="SMR" id="Q10449"/>
<dbReference type="BioGRID" id="279642">
    <property type="interactions" value="2"/>
</dbReference>
<dbReference type="CAZy" id="GH125">
    <property type="family name" value="Glycoside Hydrolase Family 125"/>
</dbReference>
<dbReference type="iPTMnet" id="Q10449"/>
<dbReference type="PaxDb" id="4896-SPAC12B10.16c.1"/>
<dbReference type="EnsemblFungi" id="SPAC12B10.16c.1">
    <property type="protein sequence ID" value="SPAC12B10.16c.1:pep"/>
    <property type="gene ID" value="SPAC12B10.16c"/>
</dbReference>
<dbReference type="GeneID" id="2543213"/>
<dbReference type="KEGG" id="spo:2543213"/>
<dbReference type="PomBase" id="SPAC12B10.16c">
    <property type="gene designation" value="mug157"/>
</dbReference>
<dbReference type="VEuPathDB" id="FungiDB:SPAC12B10.16c"/>
<dbReference type="eggNOG" id="ENOG502QR7D">
    <property type="taxonomic scope" value="Eukaryota"/>
</dbReference>
<dbReference type="HOGENOM" id="CLU_023537_1_1_1"/>
<dbReference type="InParanoid" id="Q10449"/>
<dbReference type="OMA" id="WFAWCNS"/>
<dbReference type="PhylomeDB" id="Q10449"/>
<dbReference type="PRO" id="PR:Q10449"/>
<dbReference type="Proteomes" id="UP000002485">
    <property type="component" value="Chromosome I"/>
</dbReference>
<dbReference type="GO" id="GO:0005783">
    <property type="term" value="C:endoplasmic reticulum"/>
    <property type="evidence" value="ECO:0007005"/>
    <property type="project" value="PomBase"/>
</dbReference>
<dbReference type="GO" id="GO:0005789">
    <property type="term" value="C:endoplasmic reticulum membrane"/>
    <property type="evidence" value="ECO:0007669"/>
    <property type="project" value="UniProtKB-SubCell"/>
</dbReference>
<dbReference type="GO" id="GO:0004559">
    <property type="term" value="F:alpha-mannosidase activity"/>
    <property type="evidence" value="ECO:0000255"/>
    <property type="project" value="PomBase"/>
</dbReference>
<dbReference type="GO" id="GO:0005975">
    <property type="term" value="P:carbohydrate metabolic process"/>
    <property type="evidence" value="ECO:0007669"/>
    <property type="project" value="InterPro"/>
</dbReference>
<dbReference type="GO" id="GO:0051321">
    <property type="term" value="P:meiotic cell cycle"/>
    <property type="evidence" value="ECO:0007669"/>
    <property type="project" value="UniProtKB-KW"/>
</dbReference>
<dbReference type="Gene3D" id="1.50.10.10">
    <property type="match status" value="1"/>
</dbReference>
<dbReference type="InterPro" id="IPR008928">
    <property type="entry name" value="6-hairpin_glycosidase_sf"/>
</dbReference>
<dbReference type="InterPro" id="IPR012341">
    <property type="entry name" value="6hp_glycosidase-like_sf"/>
</dbReference>
<dbReference type="InterPro" id="IPR008313">
    <property type="entry name" value="GH125"/>
</dbReference>
<dbReference type="PANTHER" id="PTHR31047">
    <property type="entry name" value="MEIOTICALLY UP-REGULATED GENE 157 PROTEIN"/>
    <property type="match status" value="1"/>
</dbReference>
<dbReference type="PANTHER" id="PTHR31047:SF0">
    <property type="entry name" value="MEIOTICALLY UP-REGULATED GENE 157 PROTEIN"/>
    <property type="match status" value="1"/>
</dbReference>
<dbReference type="Pfam" id="PF06824">
    <property type="entry name" value="Glyco_hydro_125"/>
    <property type="match status" value="1"/>
</dbReference>
<dbReference type="PIRSF" id="PIRSF028846">
    <property type="entry name" value="UCP028846"/>
    <property type="match status" value="1"/>
</dbReference>
<dbReference type="SMART" id="SM01149">
    <property type="entry name" value="DUF1237"/>
    <property type="match status" value="1"/>
</dbReference>
<dbReference type="SUPFAM" id="SSF48208">
    <property type="entry name" value="Six-hairpin glycosidases"/>
    <property type="match status" value="1"/>
</dbReference>
<gene>
    <name type="primary">mug157</name>
    <name type="ORF">SPAC12B10.16c</name>
</gene>
<organism>
    <name type="scientific">Schizosaccharomyces pombe (strain 972 / ATCC 24843)</name>
    <name type="common">Fission yeast</name>
    <dbReference type="NCBI Taxonomy" id="284812"/>
    <lineage>
        <taxon>Eukaryota</taxon>
        <taxon>Fungi</taxon>
        <taxon>Dikarya</taxon>
        <taxon>Ascomycota</taxon>
        <taxon>Taphrinomycotina</taxon>
        <taxon>Schizosaccharomycetes</taxon>
        <taxon>Schizosaccharomycetales</taxon>
        <taxon>Schizosaccharomycetaceae</taxon>
        <taxon>Schizosaccharomyces</taxon>
    </lineage>
</organism>
<name>MU157_SCHPO</name>
<comment type="function">
    <text evidence="2">Has a role in meiosis.</text>
</comment>
<comment type="subcellular location">
    <subcellularLocation>
        <location evidence="3">Endoplasmic reticulum membrane</location>
        <topology evidence="3">Multi-pass membrane protein</topology>
    </subcellularLocation>
</comment>
<sequence>MKYWQAILFFLFGIAFANNLNIPWKACPNYKTYSGRRHYPATGPLRLPFQRPATSCRTFHSKSVEQTIEDVKEQLEDEDLARLFENCMPNTLDTTIRWHAADSHNPQTLVITGDIPAEWIRDSANQLLPYLPLAKSDSPLATLILGAIQTQAEMLIQFPYCNAFQPPKQSFLSGNDNGQSDRVTPAYDPAVVFECKYELDSLASFLKLSYTYWLYTKDQSIFTVKWLAAVERIIQVLEEQSSPSFDEKTGLPKDPVYTFLRNTDSGTETLGLAGRGFPLNANASLIRSAFRPSDDACVLQYFIPANAMMVVELSHLNQMLQASGHADIARTALVWANKIQKGIDQHGIVDHPKFGKVYAYEVDGYGSILFMDDANVPSLLSLPYLGFVERDDPVYVNTRKMILSSEGNPYYLKGKVISGIGGPHIGLRNVWPMSLIVQALTSDDDDEIMSLLDVLKHSTAGLGLMHESVDVSSFKSFTRPWFSWANSLFAELILDLLERKPHLLKKNAS</sequence>
<keyword id="KW-0256">Endoplasmic reticulum</keyword>
<keyword id="KW-0469">Meiosis</keyword>
<keyword id="KW-0472">Membrane</keyword>
<keyword id="KW-1185">Reference proteome</keyword>
<keyword id="KW-0812">Transmembrane</keyword>
<keyword id="KW-1133">Transmembrane helix</keyword>
<protein>
    <recommendedName>
        <fullName>Meiotically up-regulated gene 157 protein</fullName>
    </recommendedName>
</protein>
<reference key="1">
    <citation type="journal article" date="2002" name="Nature">
        <title>The genome sequence of Schizosaccharomyces pombe.</title>
        <authorList>
            <person name="Wood V."/>
            <person name="Gwilliam R."/>
            <person name="Rajandream M.A."/>
            <person name="Lyne M.H."/>
            <person name="Lyne R."/>
            <person name="Stewart A."/>
            <person name="Sgouros J.G."/>
            <person name="Peat N."/>
            <person name="Hayles J."/>
            <person name="Baker S.G."/>
            <person name="Basham D."/>
            <person name="Bowman S."/>
            <person name="Brooks K."/>
            <person name="Brown D."/>
            <person name="Brown S."/>
            <person name="Chillingworth T."/>
            <person name="Churcher C.M."/>
            <person name="Collins M."/>
            <person name="Connor R."/>
            <person name="Cronin A."/>
            <person name="Davis P."/>
            <person name="Feltwell T."/>
            <person name="Fraser A."/>
            <person name="Gentles S."/>
            <person name="Goble A."/>
            <person name="Hamlin N."/>
            <person name="Harris D.E."/>
            <person name="Hidalgo J."/>
            <person name="Hodgson G."/>
            <person name="Holroyd S."/>
            <person name="Hornsby T."/>
            <person name="Howarth S."/>
            <person name="Huckle E.J."/>
            <person name="Hunt S."/>
            <person name="Jagels K."/>
            <person name="James K.D."/>
            <person name="Jones L."/>
            <person name="Jones M."/>
            <person name="Leather S."/>
            <person name="McDonald S."/>
            <person name="McLean J."/>
            <person name="Mooney P."/>
            <person name="Moule S."/>
            <person name="Mungall K.L."/>
            <person name="Murphy L.D."/>
            <person name="Niblett D."/>
            <person name="Odell C."/>
            <person name="Oliver K."/>
            <person name="O'Neil S."/>
            <person name="Pearson D."/>
            <person name="Quail M.A."/>
            <person name="Rabbinowitsch E."/>
            <person name="Rutherford K.M."/>
            <person name="Rutter S."/>
            <person name="Saunders D."/>
            <person name="Seeger K."/>
            <person name="Sharp S."/>
            <person name="Skelton J."/>
            <person name="Simmonds M.N."/>
            <person name="Squares R."/>
            <person name="Squares S."/>
            <person name="Stevens K."/>
            <person name="Taylor K."/>
            <person name="Taylor R.G."/>
            <person name="Tivey A."/>
            <person name="Walsh S.V."/>
            <person name="Warren T."/>
            <person name="Whitehead S."/>
            <person name="Woodward J.R."/>
            <person name="Volckaert G."/>
            <person name="Aert R."/>
            <person name="Robben J."/>
            <person name="Grymonprez B."/>
            <person name="Weltjens I."/>
            <person name="Vanstreels E."/>
            <person name="Rieger M."/>
            <person name="Schaefer M."/>
            <person name="Mueller-Auer S."/>
            <person name="Gabel C."/>
            <person name="Fuchs M."/>
            <person name="Duesterhoeft A."/>
            <person name="Fritzc C."/>
            <person name="Holzer E."/>
            <person name="Moestl D."/>
            <person name="Hilbert H."/>
            <person name="Borzym K."/>
            <person name="Langer I."/>
            <person name="Beck A."/>
            <person name="Lehrach H."/>
            <person name="Reinhardt R."/>
            <person name="Pohl T.M."/>
            <person name="Eger P."/>
            <person name="Zimmermann W."/>
            <person name="Wedler H."/>
            <person name="Wambutt R."/>
            <person name="Purnelle B."/>
            <person name="Goffeau A."/>
            <person name="Cadieu E."/>
            <person name="Dreano S."/>
            <person name="Gloux S."/>
            <person name="Lelaure V."/>
            <person name="Mottier S."/>
            <person name="Galibert F."/>
            <person name="Aves S.J."/>
            <person name="Xiang Z."/>
            <person name="Hunt C."/>
            <person name="Moore K."/>
            <person name="Hurst S.M."/>
            <person name="Lucas M."/>
            <person name="Rochet M."/>
            <person name="Gaillardin C."/>
            <person name="Tallada V.A."/>
            <person name="Garzon A."/>
            <person name="Thode G."/>
            <person name="Daga R.R."/>
            <person name="Cruzado L."/>
            <person name="Jimenez J."/>
            <person name="Sanchez M."/>
            <person name="del Rey F."/>
            <person name="Benito J."/>
            <person name="Dominguez A."/>
            <person name="Revuelta J.L."/>
            <person name="Moreno S."/>
            <person name="Armstrong J."/>
            <person name="Forsburg S.L."/>
            <person name="Cerutti L."/>
            <person name="Lowe T."/>
            <person name="McCombie W.R."/>
            <person name="Paulsen I."/>
            <person name="Potashkin J."/>
            <person name="Shpakovski G.V."/>
            <person name="Ussery D."/>
            <person name="Barrell B.G."/>
            <person name="Nurse P."/>
        </authorList>
    </citation>
    <scope>NUCLEOTIDE SEQUENCE [LARGE SCALE GENOMIC DNA]</scope>
    <source>
        <strain>972 / ATCC 24843</strain>
    </source>
</reference>
<reference key="2">
    <citation type="journal article" date="2005" name="Curr. Biol.">
        <title>A large-scale screen in S. pombe identifies seven novel genes required for critical meiotic events.</title>
        <authorList>
            <person name="Martin-Castellanos C."/>
            <person name="Blanco M."/>
            <person name="Rozalen A.E."/>
            <person name="Perez-Hidalgo L."/>
            <person name="Garcia A.I."/>
            <person name="Conde F."/>
            <person name="Mata J."/>
            <person name="Ellermeier C."/>
            <person name="Davis L."/>
            <person name="San-Segundo P."/>
            <person name="Smith G.R."/>
            <person name="Moreno S."/>
        </authorList>
    </citation>
    <scope>FUNCTION IN MEIOSIS</scope>
</reference>
<reference key="3">
    <citation type="journal article" date="2006" name="Nat. Biotechnol.">
        <title>ORFeome cloning and global analysis of protein localization in the fission yeast Schizosaccharomyces pombe.</title>
        <authorList>
            <person name="Matsuyama A."/>
            <person name="Arai R."/>
            <person name="Yashiroda Y."/>
            <person name="Shirai A."/>
            <person name="Kamata A."/>
            <person name="Sekido S."/>
            <person name="Kobayashi Y."/>
            <person name="Hashimoto A."/>
            <person name="Hamamoto M."/>
            <person name="Hiraoka Y."/>
            <person name="Horinouchi S."/>
            <person name="Yoshida M."/>
        </authorList>
    </citation>
    <scope>SUBCELLULAR LOCATION [LARGE SCALE ANALYSIS]</scope>
</reference>
<proteinExistence type="evidence at protein level"/>
<accession>Q10449</accession>
<evidence type="ECO:0000255" key="1"/>
<evidence type="ECO:0000269" key="2">
    <source>
    </source>
</evidence>
<evidence type="ECO:0000269" key="3">
    <source>
    </source>
</evidence>
<feature type="chain" id="PRO_0000116615" description="Meiotically up-regulated gene 157 protein">
    <location>
        <begin position="1"/>
        <end position="509"/>
    </location>
</feature>
<feature type="transmembrane region" description="Helical" evidence="1">
    <location>
        <begin position="4"/>
        <end position="24"/>
    </location>
</feature>
<feature type="transmembrane region" description="Helical" evidence="1">
    <location>
        <begin position="140"/>
        <end position="160"/>
    </location>
</feature>
<feature type="transmembrane region" description="Helical" evidence="1">
    <location>
        <begin position="296"/>
        <end position="316"/>
    </location>
</feature>
<feature type="transmembrane region" description="Helical" evidence="1">
    <location>
        <begin position="368"/>
        <end position="388"/>
    </location>
</feature>
<feature type="transmembrane region" description="Helical" evidence="1">
    <location>
        <begin position="417"/>
        <end position="437"/>
    </location>
</feature>